<accession>Q9ZUN1</accession>
<dbReference type="EMBL" id="AC005917">
    <property type="protein sequence ID" value="AAD10160.1"/>
    <property type="molecule type" value="Genomic_DNA"/>
</dbReference>
<dbReference type="EMBL" id="CP002685">
    <property type="protein sequence ID" value="AEC06902.1"/>
    <property type="molecule type" value="Genomic_DNA"/>
</dbReference>
<dbReference type="PIR" id="A84579">
    <property type="entry name" value="A84579"/>
</dbReference>
<dbReference type="RefSeq" id="NP_179552.1">
    <property type="nucleotide sequence ID" value="NM_127520.4"/>
</dbReference>
<dbReference type="SMR" id="Q9ZUN1"/>
<dbReference type="FunCoup" id="Q9ZUN1">
    <property type="interactions" value="920"/>
</dbReference>
<dbReference type="STRING" id="3702.Q9ZUN1"/>
<dbReference type="ESTHER" id="arath-At2g19620">
    <property type="family name" value="Ndr_family"/>
</dbReference>
<dbReference type="PaxDb" id="3702-AT2G19620.1"/>
<dbReference type="ProteomicsDB" id="249376"/>
<dbReference type="EnsemblPlants" id="AT2G19620.1">
    <property type="protein sequence ID" value="AT2G19620.1"/>
    <property type="gene ID" value="AT2G19620"/>
</dbReference>
<dbReference type="GeneID" id="816481"/>
<dbReference type="Gramene" id="AT2G19620.1">
    <property type="protein sequence ID" value="AT2G19620.1"/>
    <property type="gene ID" value="AT2G19620"/>
</dbReference>
<dbReference type="KEGG" id="ath:AT2G19620"/>
<dbReference type="Araport" id="AT2G19620"/>
<dbReference type="TAIR" id="AT2G19620">
    <property type="gene designation" value="NDL3"/>
</dbReference>
<dbReference type="eggNOG" id="KOG2931">
    <property type="taxonomic scope" value="Eukaryota"/>
</dbReference>
<dbReference type="InParanoid" id="Q9ZUN1"/>
<dbReference type="OrthoDB" id="741027at2759"/>
<dbReference type="PhylomeDB" id="Q9ZUN1"/>
<dbReference type="PRO" id="PR:Q9ZUN1"/>
<dbReference type="Proteomes" id="UP000006548">
    <property type="component" value="Chromosome 2"/>
</dbReference>
<dbReference type="ExpressionAtlas" id="Q9ZUN1">
    <property type="expression patterns" value="baseline and differential"/>
</dbReference>
<dbReference type="GO" id="GO:0005737">
    <property type="term" value="C:cytoplasm"/>
    <property type="evidence" value="ECO:0007669"/>
    <property type="project" value="UniProtKB-SubCell"/>
</dbReference>
<dbReference type="GO" id="GO:2000012">
    <property type="term" value="P:regulation of auxin polar transport"/>
    <property type="evidence" value="ECO:0000315"/>
    <property type="project" value="UniProtKB"/>
</dbReference>
<dbReference type="GO" id="GO:0009737">
    <property type="term" value="P:response to abscisic acid"/>
    <property type="evidence" value="ECO:0000314"/>
    <property type="project" value="TAIR"/>
</dbReference>
<dbReference type="GO" id="GO:0009409">
    <property type="term" value="P:response to cold"/>
    <property type="evidence" value="ECO:0000314"/>
    <property type="project" value="TAIR"/>
</dbReference>
<dbReference type="GO" id="GO:0009753">
    <property type="term" value="P:response to jasmonic acid"/>
    <property type="evidence" value="ECO:0000314"/>
    <property type="project" value="TAIR"/>
</dbReference>
<dbReference type="FunFam" id="3.40.50.1820:FF:000144">
    <property type="entry name" value="Ndr family protein"/>
    <property type="match status" value="1"/>
</dbReference>
<dbReference type="Gene3D" id="3.40.50.1820">
    <property type="entry name" value="alpha/beta hydrolase"/>
    <property type="match status" value="1"/>
</dbReference>
<dbReference type="InterPro" id="IPR029058">
    <property type="entry name" value="AB_hydrolase_fold"/>
</dbReference>
<dbReference type="InterPro" id="IPR004142">
    <property type="entry name" value="NDRG"/>
</dbReference>
<dbReference type="PANTHER" id="PTHR11034">
    <property type="entry name" value="N-MYC DOWNSTREAM REGULATED"/>
    <property type="match status" value="1"/>
</dbReference>
<dbReference type="Pfam" id="PF03096">
    <property type="entry name" value="Ndr"/>
    <property type="match status" value="1"/>
</dbReference>
<dbReference type="SUPFAM" id="SSF53474">
    <property type="entry name" value="alpha/beta-Hydrolases"/>
    <property type="match status" value="1"/>
</dbReference>
<name>NDL3_ARATH</name>
<protein>
    <recommendedName>
        <fullName evidence="5">Protein NDL3</fullName>
    </recommendedName>
    <alternativeName>
        <fullName evidence="4">Protein N-MYC DOWNREGULATED-LIKE 3</fullName>
    </alternativeName>
</protein>
<organism>
    <name type="scientific">Arabidopsis thaliana</name>
    <name type="common">Mouse-ear cress</name>
    <dbReference type="NCBI Taxonomy" id="3702"/>
    <lineage>
        <taxon>Eukaryota</taxon>
        <taxon>Viridiplantae</taxon>
        <taxon>Streptophyta</taxon>
        <taxon>Embryophyta</taxon>
        <taxon>Tracheophyta</taxon>
        <taxon>Spermatophyta</taxon>
        <taxon>Magnoliopsida</taxon>
        <taxon>eudicotyledons</taxon>
        <taxon>Gunneridae</taxon>
        <taxon>Pentapetalae</taxon>
        <taxon>rosids</taxon>
        <taxon>malvids</taxon>
        <taxon>Brassicales</taxon>
        <taxon>Brassicaceae</taxon>
        <taxon>Camelineae</taxon>
        <taxon>Arabidopsis</taxon>
    </lineage>
</organism>
<reference key="1">
    <citation type="journal article" date="1999" name="Nature">
        <title>Sequence and analysis of chromosome 2 of the plant Arabidopsis thaliana.</title>
        <authorList>
            <person name="Lin X."/>
            <person name="Kaul S."/>
            <person name="Rounsley S.D."/>
            <person name="Shea T.P."/>
            <person name="Benito M.-I."/>
            <person name="Town C.D."/>
            <person name="Fujii C.Y."/>
            <person name="Mason T.M."/>
            <person name="Bowman C.L."/>
            <person name="Barnstead M.E."/>
            <person name="Feldblyum T.V."/>
            <person name="Buell C.R."/>
            <person name="Ketchum K.A."/>
            <person name="Lee J.J."/>
            <person name="Ronning C.M."/>
            <person name="Koo H.L."/>
            <person name="Moffat K.S."/>
            <person name="Cronin L.A."/>
            <person name="Shen M."/>
            <person name="Pai G."/>
            <person name="Van Aken S."/>
            <person name="Umayam L."/>
            <person name="Tallon L.J."/>
            <person name="Gill J.E."/>
            <person name="Adams M.D."/>
            <person name="Carrera A.J."/>
            <person name="Creasy T.H."/>
            <person name="Goodman H.M."/>
            <person name="Somerville C.R."/>
            <person name="Copenhaver G.P."/>
            <person name="Preuss D."/>
            <person name="Nierman W.C."/>
            <person name="White O."/>
            <person name="Eisen J.A."/>
            <person name="Salzberg S.L."/>
            <person name="Fraser C.M."/>
            <person name="Venter J.C."/>
        </authorList>
    </citation>
    <scope>NUCLEOTIDE SEQUENCE [LARGE SCALE GENOMIC DNA]</scope>
    <source>
        <strain>cv. Columbia</strain>
    </source>
</reference>
<reference key="2">
    <citation type="journal article" date="2017" name="Plant J.">
        <title>Araport11: a complete reannotation of the Arabidopsis thaliana reference genome.</title>
        <authorList>
            <person name="Cheng C.Y."/>
            <person name="Krishnakumar V."/>
            <person name="Chan A.P."/>
            <person name="Thibaud-Nissen F."/>
            <person name="Schobel S."/>
            <person name="Town C.D."/>
        </authorList>
    </citation>
    <scope>GENOME REANNOTATION</scope>
    <source>
        <strain>cv. Columbia</strain>
    </source>
</reference>
<reference key="3">
    <citation type="journal article" date="2009" name="Plant Cell">
        <title>Arabidopsis N-MYC DOWNREGULATED-LIKE1, a positive regulator of auxin transport in a G protein-mediated pathway.</title>
        <authorList>
            <person name="Mudgil Y."/>
            <person name="Uhrig J.F."/>
            <person name="Zhou J."/>
            <person name="Temple B."/>
            <person name="Jiang K."/>
            <person name="Jones A.M."/>
        </authorList>
    </citation>
    <scope>FUNCTION</scope>
    <scope>INTERACTION WITH GB1; GG1; GG2 AND RGS1</scope>
</reference>
<reference key="4">
    <citation type="journal article" date="2013" name="PLoS ONE">
        <title>N-MYC down-regulated-like proteins regulate meristem initiation by modulating auxin transport and MAX2 expression.</title>
        <authorList>
            <person name="Mudgil Y."/>
            <person name="Ghawana S."/>
            <person name="Jones A.M."/>
        </authorList>
    </citation>
    <scope>FUNCTION</scope>
</reference>
<keyword id="KW-0963">Cytoplasm</keyword>
<keyword id="KW-0341">Growth regulation</keyword>
<keyword id="KW-1185">Reference proteome</keyword>
<comment type="function">
    <text evidence="2 3">Involved in a signaling pathway that modulates root auxin transport and auxin gradients. Acts partially by positively regulating the auxin carrier PIN2 and AUX1 (PubMed:19948787). Acts, together with GB1 as positive regulator of meristem initiation and branching. GB1 and NDL3 positively regulate basipetal inflorescence auxin transport and modulate MAX2 expression in shoots, which regulates organ and lateral meristem formation by the establishment and maintenance of auxin gradients (PubMed:24223735).</text>
</comment>
<comment type="subunit">
    <text evidence="2">Interacts with the heterodimers formed by GB1 and GG1, or GB1 and GG2. Interacts with RGS1.</text>
</comment>
<comment type="subcellular location">
    <subcellularLocation>
        <location evidence="1">Cytoplasm</location>
    </subcellularLocation>
</comment>
<comment type="similarity">
    <text evidence="5">Belongs to the NDRG family.</text>
</comment>
<proteinExistence type="evidence at protein level"/>
<feature type="chain" id="PRO_0000442106" description="Protein NDL3">
    <location>
        <begin position="1"/>
        <end position="347"/>
    </location>
</feature>
<sequence length="347" mass="38702">MVGLNNAVSLDIEEICNGGKEHHVKTCHGSVSVVVYGDQEKPALITYPDVALNYMSCFQGLFLCPEAVSLLLHNFCIYHISPPGHEFGAAPVCSNDPSPSVEDLADQILEVLNFFSLEAVMCMGITAGAYILSLFAIKHKERVLGLILISPLCKAPSWSEWFYYKVVSNLLYYYGMSGLLKDIFLQRYFSKEARGSSEVPERDVVHECRRLLGERHGSSLMRFLEAVNRRHDLTDGLKSLKCRTLIFVGDQSPFHSETLHMVTALDRKYSALVEVQACGSMVTEEQPHAMLIPMEFFFMGFGLYRPGRVSDSPRSPLSPSCISPELLSPESLGLKLKPIKTRVPTKC</sequence>
<evidence type="ECO:0000250" key="1">
    <source>
        <dbReference type="UniProtKB" id="Q9FJT7"/>
    </source>
</evidence>
<evidence type="ECO:0000269" key="2">
    <source>
    </source>
</evidence>
<evidence type="ECO:0000269" key="3">
    <source>
    </source>
</evidence>
<evidence type="ECO:0000303" key="4">
    <source>
    </source>
</evidence>
<evidence type="ECO:0000305" key="5"/>
<evidence type="ECO:0000312" key="6">
    <source>
        <dbReference type="Araport" id="AT2G19620"/>
    </source>
</evidence>
<gene>
    <name evidence="4" type="primary">NDL3</name>
    <name evidence="6" type="ordered locus">At2g19620</name>
</gene>